<comment type="function">
    <text evidence="1">May be involved in the splicing of group IIB introns in mitochondria.</text>
</comment>
<comment type="subunit">
    <text evidence="1">Part of large ribonucleo-protein complexes that include group IIB introns.</text>
</comment>
<comment type="subcellular location">
    <subcellularLocation>
        <location evidence="5">Mitochondrion</location>
    </subcellularLocation>
</comment>
<dbReference type="EMBL" id="AB005232">
    <property type="protein sequence ID" value="BAB08768.1"/>
    <property type="molecule type" value="Genomic_DNA"/>
</dbReference>
<dbReference type="EMBL" id="CP002688">
    <property type="protein sequence ID" value="AED96553.1"/>
    <property type="molecule type" value="Genomic_DNA"/>
</dbReference>
<dbReference type="EMBL" id="BP797158">
    <property type="status" value="NOT_ANNOTATED_CDS"/>
    <property type="molecule type" value="mRNA"/>
</dbReference>
<dbReference type="RefSeq" id="NP_200300.1">
    <property type="nucleotide sequence ID" value="NM_124871.3"/>
</dbReference>
<dbReference type="SMR" id="Q9FFU1"/>
<dbReference type="FunCoup" id="Q9FFU1">
    <property type="interactions" value="1245"/>
</dbReference>
<dbReference type="PaxDb" id="3702-AT5G54890.1"/>
<dbReference type="ProteomicsDB" id="240392"/>
<dbReference type="EnsemblPlants" id="AT5G54890.1">
    <property type="protein sequence ID" value="AT5G54890.1"/>
    <property type="gene ID" value="AT5G54890"/>
</dbReference>
<dbReference type="GeneID" id="835580"/>
<dbReference type="Gramene" id="AT5G54890.1">
    <property type="protein sequence ID" value="AT5G54890.1"/>
    <property type="gene ID" value="AT5G54890"/>
</dbReference>
<dbReference type="KEGG" id="ath:AT5G54890"/>
<dbReference type="Araport" id="AT5G54890"/>
<dbReference type="TAIR" id="AT5G54890">
    <property type="gene designation" value="MCSF2"/>
</dbReference>
<dbReference type="eggNOG" id="ENOG502QT4I">
    <property type="taxonomic scope" value="Eukaryota"/>
</dbReference>
<dbReference type="HOGENOM" id="CLU_053415_1_0_1"/>
<dbReference type="InParanoid" id="Q9FFU1"/>
<dbReference type="OMA" id="DIFDPPF"/>
<dbReference type="OrthoDB" id="1911210at2759"/>
<dbReference type="PhylomeDB" id="Q9FFU1"/>
<dbReference type="PRO" id="PR:Q9FFU1"/>
<dbReference type="Proteomes" id="UP000006548">
    <property type="component" value="Chromosome 5"/>
</dbReference>
<dbReference type="ExpressionAtlas" id="Q9FFU1">
    <property type="expression patterns" value="baseline and differential"/>
</dbReference>
<dbReference type="GO" id="GO:0005739">
    <property type="term" value="C:mitochondrion"/>
    <property type="evidence" value="ECO:0000314"/>
    <property type="project" value="TAIR"/>
</dbReference>
<dbReference type="GO" id="GO:1990904">
    <property type="term" value="C:ribonucleoprotein complex"/>
    <property type="evidence" value="ECO:0007669"/>
    <property type="project" value="UniProtKB-KW"/>
</dbReference>
<dbReference type="GO" id="GO:0003723">
    <property type="term" value="F:RNA binding"/>
    <property type="evidence" value="ECO:0007669"/>
    <property type="project" value="UniProtKB-KW"/>
</dbReference>
<dbReference type="GO" id="GO:0000373">
    <property type="term" value="P:Group II intron splicing"/>
    <property type="evidence" value="ECO:0007669"/>
    <property type="project" value="InterPro"/>
</dbReference>
<dbReference type="GO" id="GO:0006397">
    <property type="term" value="P:mRNA processing"/>
    <property type="evidence" value="ECO:0007669"/>
    <property type="project" value="UniProtKB-KW"/>
</dbReference>
<dbReference type="FunFam" id="3.30.110.60:FF:000002">
    <property type="entry name" value="CRS2-associated factor 1, chloroplastic"/>
    <property type="match status" value="2"/>
</dbReference>
<dbReference type="Gene3D" id="3.30.110.60">
    <property type="entry name" value="YhbY-like"/>
    <property type="match status" value="2"/>
</dbReference>
<dbReference type="InterPro" id="IPR044599">
    <property type="entry name" value="CAF1P_plant"/>
</dbReference>
<dbReference type="InterPro" id="IPR001890">
    <property type="entry name" value="RNA-binding_CRM"/>
</dbReference>
<dbReference type="InterPro" id="IPR035920">
    <property type="entry name" value="YhbY-like_sf"/>
</dbReference>
<dbReference type="PANTHER" id="PTHR46247">
    <property type="entry name" value="CRS2-ASSOCIATED FACTOR 1, CHLOROPLASTIC"/>
    <property type="match status" value="1"/>
</dbReference>
<dbReference type="PANTHER" id="PTHR46247:SF4">
    <property type="entry name" value="CRS2-ASSOCIATED FACTOR 2, MITOCHONDRIAL"/>
    <property type="match status" value="1"/>
</dbReference>
<dbReference type="Pfam" id="PF01985">
    <property type="entry name" value="CRS1_YhbY"/>
    <property type="match status" value="2"/>
</dbReference>
<dbReference type="SMART" id="SM01103">
    <property type="entry name" value="CRS1_YhbY"/>
    <property type="match status" value="2"/>
</dbReference>
<dbReference type="SUPFAM" id="SSF75471">
    <property type="entry name" value="YhbY-like"/>
    <property type="match status" value="2"/>
</dbReference>
<dbReference type="PROSITE" id="PS51295">
    <property type="entry name" value="CRM"/>
    <property type="match status" value="2"/>
</dbReference>
<evidence type="ECO:0000250" key="1"/>
<evidence type="ECO:0000255" key="2"/>
<evidence type="ECO:0000255" key="3">
    <source>
        <dbReference type="PROSITE-ProRule" id="PRU00626"/>
    </source>
</evidence>
<evidence type="ECO:0000256" key="4">
    <source>
        <dbReference type="SAM" id="MobiDB-lite"/>
    </source>
</evidence>
<evidence type="ECO:0000305" key="5"/>
<reference key="1">
    <citation type="journal article" date="1997" name="DNA Res.">
        <title>Structural analysis of Arabidopsis thaliana chromosome 5. I. Sequence features of the 1.6 Mb regions covered by twenty physically assigned P1 clones.</title>
        <authorList>
            <person name="Sato S."/>
            <person name="Kotani H."/>
            <person name="Nakamura Y."/>
            <person name="Kaneko T."/>
            <person name="Asamizu E."/>
            <person name="Fukami M."/>
            <person name="Miyajima N."/>
            <person name="Tabata S."/>
        </authorList>
    </citation>
    <scope>NUCLEOTIDE SEQUENCE [LARGE SCALE GENOMIC DNA]</scope>
    <source>
        <strain>cv. Columbia</strain>
    </source>
</reference>
<reference key="2">
    <citation type="journal article" date="2017" name="Plant J.">
        <title>Araport11: a complete reannotation of the Arabidopsis thaliana reference genome.</title>
        <authorList>
            <person name="Cheng C.Y."/>
            <person name="Krishnakumar V."/>
            <person name="Chan A.P."/>
            <person name="Thibaud-Nissen F."/>
            <person name="Schobel S."/>
            <person name="Town C.D."/>
        </authorList>
    </citation>
    <scope>GENOME REANNOTATION</scope>
    <source>
        <strain>cv. Columbia</strain>
    </source>
</reference>
<reference key="3">
    <citation type="journal article" date="2002" name="Science">
        <title>Functional annotation of a full-length Arabidopsis cDNA collection.</title>
        <authorList>
            <person name="Seki M."/>
            <person name="Narusaka M."/>
            <person name="Kamiya A."/>
            <person name="Ishida J."/>
            <person name="Satou M."/>
            <person name="Sakurai T."/>
            <person name="Nakajima M."/>
            <person name="Enju A."/>
            <person name="Akiyama K."/>
            <person name="Oono Y."/>
            <person name="Muramatsu M."/>
            <person name="Hayashizaki Y."/>
            <person name="Kawai J."/>
            <person name="Carninci P."/>
            <person name="Itoh M."/>
            <person name="Ishii Y."/>
            <person name="Arakawa T."/>
            <person name="Shibata K."/>
            <person name="Shinagawa A."/>
            <person name="Shinozaki K."/>
        </authorList>
    </citation>
    <scope>NUCLEOTIDE SEQUENCE [LARGE SCALE MRNA] OF 1-126</scope>
    <source>
        <strain>cv. Columbia</strain>
    </source>
</reference>
<sequence length="358" mass="41411">MLSIRRSLTLAKEPKDLFLFLCNLRARCVSTDDYDPPFSPLSKPTKPPKEKKKQKTKKQDQSSELVNDLKIPVISDLPFDFRYSYSETNPEIEPIGFREPKRFSPFGPGRLDRKWTGTTALASPEIDQSQWVEERARVLGETLTEDEVTELIERYRHSDCTRQINLGKGGVTHNMIDDIHNHWKKAEAVRIKCLGVPTLDMDNICFHLEEKSGGKIVYRNINILVLYRGRNYDPKSRPIIPLMLWKPHPPIYPRLVKNVADGLEFEETKEMRNRGLHSPALMKLTRNGVYVNVVGRVREEFETEEIVRLDCTHVGMSDCKRIGVKLKEMVPCVPILFKDEQIILWRGKRTGEEELVTL</sequence>
<organism>
    <name type="scientific">Arabidopsis thaliana</name>
    <name type="common">Mouse-ear cress</name>
    <dbReference type="NCBI Taxonomy" id="3702"/>
    <lineage>
        <taxon>Eukaryota</taxon>
        <taxon>Viridiplantae</taxon>
        <taxon>Streptophyta</taxon>
        <taxon>Embryophyta</taxon>
        <taxon>Tracheophyta</taxon>
        <taxon>Spermatophyta</taxon>
        <taxon>Magnoliopsida</taxon>
        <taxon>eudicotyledons</taxon>
        <taxon>Gunneridae</taxon>
        <taxon>Pentapetalae</taxon>
        <taxon>rosids</taxon>
        <taxon>malvids</taxon>
        <taxon>Brassicales</taxon>
        <taxon>Brassicaceae</taxon>
        <taxon>Camelineae</taxon>
        <taxon>Arabidopsis</taxon>
    </lineage>
</organism>
<gene>
    <name type="ordered locus">At5g54890</name>
    <name type="ORF">MBG8.16</name>
</gene>
<name>CAF2M_ARATH</name>
<protein>
    <recommendedName>
        <fullName>CRS2-associated factor 2, mitochondrial</fullName>
    </recommendedName>
</protein>
<feature type="transit peptide" description="Mitochondrion" evidence="2">
    <location>
        <begin position="1"/>
        <end position="28"/>
    </location>
</feature>
<feature type="chain" id="PRO_0000283622" description="CRS2-associated factor 2, mitochondrial">
    <location>
        <begin position="29"/>
        <end position="358"/>
    </location>
</feature>
<feature type="domain" description="CRM 1" evidence="3">
    <location>
        <begin position="141"/>
        <end position="239"/>
    </location>
</feature>
<feature type="domain" description="CRM 2" evidence="3">
    <location>
        <begin position="261"/>
        <end position="357"/>
    </location>
</feature>
<feature type="region of interest" description="Disordered" evidence="4">
    <location>
        <begin position="35"/>
        <end position="64"/>
    </location>
</feature>
<keyword id="KW-0496">Mitochondrion</keyword>
<keyword id="KW-0507">mRNA processing</keyword>
<keyword id="KW-0508">mRNA splicing</keyword>
<keyword id="KW-1185">Reference proteome</keyword>
<keyword id="KW-0677">Repeat</keyword>
<keyword id="KW-0687">Ribonucleoprotein</keyword>
<keyword id="KW-0694">RNA-binding</keyword>
<keyword id="KW-0809">Transit peptide</keyword>
<accession>Q9FFU1</accession>
<proteinExistence type="evidence at transcript level"/>